<sequence length="251" mass="28290">MDPKIKIRGVNFFYHKHQVLKNINMDFPERQITAIIGPSGCGKSTLLRALNRMNDIVSGARLEGAVLLDNENIYSPNLDVVNLRKRVGMVFQQPNPFPKSIFDNVAFGPRMLGTTVQSRLDEVVEKSLRQAALWDEVKDNLHKSGLALSGGQQQRLCIARVLAIEPEVILMDEPCSALDPVSTMRIEELMQELKQNYTIAIVTHNMQQAARASDWTGFLLTGDLVEYGRTGEIFSRPRDKRTEDYITGRFG</sequence>
<evidence type="ECO:0000255" key="1">
    <source>
        <dbReference type="HAMAP-Rule" id="MF_01702"/>
    </source>
</evidence>
<reference key="1">
    <citation type="journal article" date="2005" name="Nat. Biotechnol.">
        <title>Genome sequence of the chlorinated compound-respiring bacterium Dehalococcoides species strain CBDB1.</title>
        <authorList>
            <person name="Kube M."/>
            <person name="Beck A."/>
            <person name="Zinder S.H."/>
            <person name="Kuhl H."/>
            <person name="Reinhardt R."/>
            <person name="Adrian L."/>
        </authorList>
    </citation>
    <scope>NUCLEOTIDE SEQUENCE [LARGE SCALE GENOMIC DNA]</scope>
    <source>
        <strain>CBDB1</strain>
    </source>
</reference>
<proteinExistence type="inferred from homology"/>
<protein>
    <recommendedName>
        <fullName evidence="1">Phosphate import ATP-binding protein PstB</fullName>
        <ecNumber evidence="1">7.3.2.1</ecNumber>
    </recommendedName>
    <alternativeName>
        <fullName evidence="1">ABC phosphate transporter</fullName>
    </alternativeName>
    <alternativeName>
        <fullName evidence="1">Phosphate-transporting ATPase</fullName>
    </alternativeName>
</protein>
<organism>
    <name type="scientific">Dehalococcoides mccartyi (strain CBDB1)</name>
    <dbReference type="NCBI Taxonomy" id="255470"/>
    <lineage>
        <taxon>Bacteria</taxon>
        <taxon>Bacillati</taxon>
        <taxon>Chloroflexota</taxon>
        <taxon>Dehalococcoidia</taxon>
        <taxon>Dehalococcoidales</taxon>
        <taxon>Dehalococcoidaceae</taxon>
        <taxon>Dehalococcoides</taxon>
    </lineage>
</organism>
<gene>
    <name evidence="1" type="primary">pstB</name>
    <name type="ordered locus">cbdbA165</name>
</gene>
<keyword id="KW-0067">ATP-binding</keyword>
<keyword id="KW-1003">Cell membrane</keyword>
<keyword id="KW-0472">Membrane</keyword>
<keyword id="KW-0547">Nucleotide-binding</keyword>
<keyword id="KW-0592">Phosphate transport</keyword>
<keyword id="KW-1278">Translocase</keyword>
<keyword id="KW-0813">Transport</keyword>
<accession>Q3ZWN4</accession>
<dbReference type="EC" id="7.3.2.1" evidence="1"/>
<dbReference type="EMBL" id="AJ965256">
    <property type="protein sequence ID" value="CAI82417.1"/>
    <property type="molecule type" value="Genomic_DNA"/>
</dbReference>
<dbReference type="RefSeq" id="WP_011308775.1">
    <property type="nucleotide sequence ID" value="NC_007356.1"/>
</dbReference>
<dbReference type="SMR" id="Q3ZWN4"/>
<dbReference type="KEGG" id="deh:cbdbA165"/>
<dbReference type="HOGENOM" id="CLU_000604_1_22_0"/>
<dbReference type="Proteomes" id="UP000000433">
    <property type="component" value="Chromosome"/>
</dbReference>
<dbReference type="GO" id="GO:0005886">
    <property type="term" value="C:plasma membrane"/>
    <property type="evidence" value="ECO:0007669"/>
    <property type="project" value="UniProtKB-SubCell"/>
</dbReference>
<dbReference type="GO" id="GO:0005524">
    <property type="term" value="F:ATP binding"/>
    <property type="evidence" value="ECO:0007669"/>
    <property type="project" value="UniProtKB-KW"/>
</dbReference>
<dbReference type="GO" id="GO:0016887">
    <property type="term" value="F:ATP hydrolysis activity"/>
    <property type="evidence" value="ECO:0007669"/>
    <property type="project" value="InterPro"/>
</dbReference>
<dbReference type="GO" id="GO:0015415">
    <property type="term" value="F:ATPase-coupled phosphate ion transmembrane transporter activity"/>
    <property type="evidence" value="ECO:0007669"/>
    <property type="project" value="UniProtKB-EC"/>
</dbReference>
<dbReference type="GO" id="GO:0035435">
    <property type="term" value="P:phosphate ion transmembrane transport"/>
    <property type="evidence" value="ECO:0007669"/>
    <property type="project" value="InterPro"/>
</dbReference>
<dbReference type="CDD" id="cd03260">
    <property type="entry name" value="ABC_PstB_phosphate_transporter"/>
    <property type="match status" value="1"/>
</dbReference>
<dbReference type="FunFam" id="3.40.50.300:FF:000132">
    <property type="entry name" value="Phosphate import ATP-binding protein PstB"/>
    <property type="match status" value="1"/>
</dbReference>
<dbReference type="Gene3D" id="3.40.50.300">
    <property type="entry name" value="P-loop containing nucleotide triphosphate hydrolases"/>
    <property type="match status" value="1"/>
</dbReference>
<dbReference type="InterPro" id="IPR003593">
    <property type="entry name" value="AAA+_ATPase"/>
</dbReference>
<dbReference type="InterPro" id="IPR003439">
    <property type="entry name" value="ABC_transporter-like_ATP-bd"/>
</dbReference>
<dbReference type="InterPro" id="IPR017871">
    <property type="entry name" value="ABC_transporter-like_CS"/>
</dbReference>
<dbReference type="InterPro" id="IPR027417">
    <property type="entry name" value="P-loop_NTPase"/>
</dbReference>
<dbReference type="InterPro" id="IPR005670">
    <property type="entry name" value="PstB-like"/>
</dbReference>
<dbReference type="NCBIfam" id="TIGR00972">
    <property type="entry name" value="3a0107s01c2"/>
    <property type="match status" value="1"/>
</dbReference>
<dbReference type="PANTHER" id="PTHR43423">
    <property type="entry name" value="ABC TRANSPORTER I FAMILY MEMBER 17"/>
    <property type="match status" value="1"/>
</dbReference>
<dbReference type="PANTHER" id="PTHR43423:SF1">
    <property type="entry name" value="ABC TRANSPORTER I FAMILY MEMBER 17"/>
    <property type="match status" value="1"/>
</dbReference>
<dbReference type="Pfam" id="PF00005">
    <property type="entry name" value="ABC_tran"/>
    <property type="match status" value="1"/>
</dbReference>
<dbReference type="SMART" id="SM00382">
    <property type="entry name" value="AAA"/>
    <property type="match status" value="1"/>
</dbReference>
<dbReference type="SUPFAM" id="SSF52540">
    <property type="entry name" value="P-loop containing nucleoside triphosphate hydrolases"/>
    <property type="match status" value="1"/>
</dbReference>
<dbReference type="PROSITE" id="PS00211">
    <property type="entry name" value="ABC_TRANSPORTER_1"/>
    <property type="match status" value="1"/>
</dbReference>
<dbReference type="PROSITE" id="PS50893">
    <property type="entry name" value="ABC_TRANSPORTER_2"/>
    <property type="match status" value="1"/>
</dbReference>
<dbReference type="PROSITE" id="PS51238">
    <property type="entry name" value="PSTB"/>
    <property type="match status" value="1"/>
</dbReference>
<comment type="function">
    <text evidence="1">Part of the ABC transporter complex PstSACB involved in phosphate import. Responsible for energy coupling to the transport system.</text>
</comment>
<comment type="catalytic activity">
    <reaction evidence="1">
        <text>phosphate(out) + ATP + H2O = ADP + 2 phosphate(in) + H(+)</text>
        <dbReference type="Rhea" id="RHEA:24440"/>
        <dbReference type="ChEBI" id="CHEBI:15377"/>
        <dbReference type="ChEBI" id="CHEBI:15378"/>
        <dbReference type="ChEBI" id="CHEBI:30616"/>
        <dbReference type="ChEBI" id="CHEBI:43474"/>
        <dbReference type="ChEBI" id="CHEBI:456216"/>
        <dbReference type="EC" id="7.3.2.1"/>
    </reaction>
</comment>
<comment type="subunit">
    <text evidence="1">The complex is composed of two ATP-binding proteins (PstB), two transmembrane proteins (PstC and PstA) and a solute-binding protein (PstS).</text>
</comment>
<comment type="subcellular location">
    <subcellularLocation>
        <location evidence="1">Cell membrane</location>
        <topology evidence="1">Peripheral membrane protein</topology>
    </subcellularLocation>
</comment>
<comment type="similarity">
    <text evidence="1">Belongs to the ABC transporter superfamily. Phosphate importer (TC 3.A.1.7) family.</text>
</comment>
<feature type="chain" id="PRO_0000272446" description="Phosphate import ATP-binding protein PstB">
    <location>
        <begin position="1"/>
        <end position="251"/>
    </location>
</feature>
<feature type="domain" description="ABC transporter" evidence="1">
    <location>
        <begin position="5"/>
        <end position="246"/>
    </location>
</feature>
<feature type="binding site" evidence="1">
    <location>
        <begin position="37"/>
        <end position="44"/>
    </location>
    <ligand>
        <name>ATP</name>
        <dbReference type="ChEBI" id="CHEBI:30616"/>
    </ligand>
</feature>
<name>PSTB_DEHMC</name>